<evidence type="ECO:0000255" key="1">
    <source>
        <dbReference type="HAMAP-Rule" id="MF_00344"/>
    </source>
</evidence>
<accession>B2SGK4</accession>
<gene>
    <name evidence="1" type="primary">guaA</name>
    <name type="ordered locus">FTM_0931</name>
</gene>
<organism>
    <name type="scientific">Francisella tularensis subsp. mediasiatica (strain FSC147)</name>
    <dbReference type="NCBI Taxonomy" id="441952"/>
    <lineage>
        <taxon>Bacteria</taxon>
        <taxon>Pseudomonadati</taxon>
        <taxon>Pseudomonadota</taxon>
        <taxon>Gammaproteobacteria</taxon>
        <taxon>Thiotrichales</taxon>
        <taxon>Francisellaceae</taxon>
        <taxon>Francisella</taxon>
    </lineage>
</organism>
<dbReference type="EC" id="6.3.5.2" evidence="1"/>
<dbReference type="EMBL" id="CP000915">
    <property type="protein sequence ID" value="ACD30863.1"/>
    <property type="molecule type" value="Genomic_DNA"/>
</dbReference>
<dbReference type="SMR" id="B2SGK4"/>
<dbReference type="MEROPS" id="C26.957"/>
<dbReference type="KEGG" id="ftm:FTM_0931"/>
<dbReference type="HOGENOM" id="CLU_014340_0_5_6"/>
<dbReference type="UniPathway" id="UPA00189">
    <property type="reaction ID" value="UER00296"/>
</dbReference>
<dbReference type="GO" id="GO:0005829">
    <property type="term" value="C:cytosol"/>
    <property type="evidence" value="ECO:0007669"/>
    <property type="project" value="TreeGrafter"/>
</dbReference>
<dbReference type="GO" id="GO:0005524">
    <property type="term" value="F:ATP binding"/>
    <property type="evidence" value="ECO:0007669"/>
    <property type="project" value="UniProtKB-UniRule"/>
</dbReference>
<dbReference type="GO" id="GO:0003921">
    <property type="term" value="F:GMP synthase activity"/>
    <property type="evidence" value="ECO:0007669"/>
    <property type="project" value="InterPro"/>
</dbReference>
<dbReference type="CDD" id="cd01742">
    <property type="entry name" value="GATase1_GMP_Synthase"/>
    <property type="match status" value="1"/>
</dbReference>
<dbReference type="CDD" id="cd01997">
    <property type="entry name" value="GMP_synthase_C"/>
    <property type="match status" value="1"/>
</dbReference>
<dbReference type="FunFam" id="3.30.300.10:FF:000002">
    <property type="entry name" value="GMP synthase [glutamine-hydrolyzing]"/>
    <property type="match status" value="1"/>
</dbReference>
<dbReference type="FunFam" id="3.40.50.620:FF:000001">
    <property type="entry name" value="GMP synthase [glutamine-hydrolyzing]"/>
    <property type="match status" value="1"/>
</dbReference>
<dbReference type="FunFam" id="3.40.50.880:FF:000001">
    <property type="entry name" value="GMP synthase [glutamine-hydrolyzing]"/>
    <property type="match status" value="1"/>
</dbReference>
<dbReference type="Gene3D" id="3.30.300.10">
    <property type="match status" value="1"/>
</dbReference>
<dbReference type="Gene3D" id="3.40.50.880">
    <property type="match status" value="1"/>
</dbReference>
<dbReference type="Gene3D" id="3.40.50.620">
    <property type="entry name" value="HUPs"/>
    <property type="match status" value="1"/>
</dbReference>
<dbReference type="HAMAP" id="MF_00344">
    <property type="entry name" value="GMP_synthase"/>
    <property type="match status" value="1"/>
</dbReference>
<dbReference type="InterPro" id="IPR029062">
    <property type="entry name" value="Class_I_gatase-like"/>
</dbReference>
<dbReference type="InterPro" id="IPR017926">
    <property type="entry name" value="GATASE"/>
</dbReference>
<dbReference type="InterPro" id="IPR001674">
    <property type="entry name" value="GMP_synth_C"/>
</dbReference>
<dbReference type="InterPro" id="IPR004739">
    <property type="entry name" value="GMP_synth_GATase"/>
</dbReference>
<dbReference type="InterPro" id="IPR022955">
    <property type="entry name" value="GMP_synthase"/>
</dbReference>
<dbReference type="InterPro" id="IPR025777">
    <property type="entry name" value="GMPS_ATP_PPase_dom"/>
</dbReference>
<dbReference type="InterPro" id="IPR022310">
    <property type="entry name" value="NAD/GMP_synthase"/>
</dbReference>
<dbReference type="InterPro" id="IPR014729">
    <property type="entry name" value="Rossmann-like_a/b/a_fold"/>
</dbReference>
<dbReference type="NCBIfam" id="TIGR00884">
    <property type="entry name" value="guaA_Cterm"/>
    <property type="match status" value="1"/>
</dbReference>
<dbReference type="NCBIfam" id="TIGR00888">
    <property type="entry name" value="guaA_Nterm"/>
    <property type="match status" value="1"/>
</dbReference>
<dbReference type="NCBIfam" id="NF000848">
    <property type="entry name" value="PRK00074.1"/>
    <property type="match status" value="1"/>
</dbReference>
<dbReference type="PANTHER" id="PTHR11922:SF2">
    <property type="entry name" value="GMP SYNTHASE [GLUTAMINE-HYDROLYZING]"/>
    <property type="match status" value="1"/>
</dbReference>
<dbReference type="PANTHER" id="PTHR11922">
    <property type="entry name" value="GMP SYNTHASE-RELATED"/>
    <property type="match status" value="1"/>
</dbReference>
<dbReference type="Pfam" id="PF00117">
    <property type="entry name" value="GATase"/>
    <property type="match status" value="1"/>
</dbReference>
<dbReference type="Pfam" id="PF00958">
    <property type="entry name" value="GMP_synt_C"/>
    <property type="match status" value="1"/>
</dbReference>
<dbReference type="Pfam" id="PF02540">
    <property type="entry name" value="NAD_synthase"/>
    <property type="match status" value="1"/>
</dbReference>
<dbReference type="PRINTS" id="PR00097">
    <property type="entry name" value="ANTSNTHASEII"/>
</dbReference>
<dbReference type="PRINTS" id="PR00096">
    <property type="entry name" value="GATASE"/>
</dbReference>
<dbReference type="SUPFAM" id="SSF52402">
    <property type="entry name" value="Adenine nucleotide alpha hydrolases-like"/>
    <property type="match status" value="1"/>
</dbReference>
<dbReference type="SUPFAM" id="SSF52317">
    <property type="entry name" value="Class I glutamine amidotransferase-like"/>
    <property type="match status" value="1"/>
</dbReference>
<dbReference type="SUPFAM" id="SSF54810">
    <property type="entry name" value="GMP synthetase C-terminal dimerisation domain"/>
    <property type="match status" value="1"/>
</dbReference>
<dbReference type="PROSITE" id="PS51273">
    <property type="entry name" value="GATASE_TYPE_1"/>
    <property type="match status" value="1"/>
</dbReference>
<dbReference type="PROSITE" id="PS51553">
    <property type="entry name" value="GMPS_ATP_PPASE"/>
    <property type="match status" value="1"/>
</dbReference>
<proteinExistence type="inferred from homology"/>
<reference key="1">
    <citation type="journal article" date="2009" name="PLoS Pathog.">
        <title>Molecular evolutionary consequences of niche restriction in Francisella tularensis, a facultative intracellular pathogen.</title>
        <authorList>
            <person name="Larsson P."/>
            <person name="Elfsmark D."/>
            <person name="Svensson K."/>
            <person name="Wikstroem P."/>
            <person name="Forsman M."/>
            <person name="Brettin T."/>
            <person name="Keim P."/>
            <person name="Johansson A."/>
        </authorList>
    </citation>
    <scope>NUCLEOTIDE SEQUENCE [LARGE SCALE GENOMIC DNA]</scope>
    <source>
        <strain>FSC147</strain>
    </source>
</reference>
<comment type="function">
    <text evidence="1">Catalyzes the synthesis of GMP from XMP.</text>
</comment>
<comment type="catalytic activity">
    <reaction evidence="1">
        <text>XMP + L-glutamine + ATP + H2O = GMP + L-glutamate + AMP + diphosphate + 2 H(+)</text>
        <dbReference type="Rhea" id="RHEA:11680"/>
        <dbReference type="ChEBI" id="CHEBI:15377"/>
        <dbReference type="ChEBI" id="CHEBI:15378"/>
        <dbReference type="ChEBI" id="CHEBI:29985"/>
        <dbReference type="ChEBI" id="CHEBI:30616"/>
        <dbReference type="ChEBI" id="CHEBI:33019"/>
        <dbReference type="ChEBI" id="CHEBI:57464"/>
        <dbReference type="ChEBI" id="CHEBI:58115"/>
        <dbReference type="ChEBI" id="CHEBI:58359"/>
        <dbReference type="ChEBI" id="CHEBI:456215"/>
        <dbReference type="EC" id="6.3.5.2"/>
    </reaction>
</comment>
<comment type="pathway">
    <text evidence="1">Purine metabolism; GMP biosynthesis; GMP from XMP (L-Gln route): step 1/1.</text>
</comment>
<comment type="subunit">
    <text evidence="1">Homodimer.</text>
</comment>
<protein>
    <recommendedName>
        <fullName evidence="1">GMP synthase [glutamine-hydrolyzing]</fullName>
        <ecNumber evidence="1">6.3.5.2</ecNumber>
    </recommendedName>
    <alternativeName>
        <fullName evidence="1">GMP synthetase</fullName>
    </alternativeName>
    <alternativeName>
        <fullName evidence="1">Glutamine amidotransferase</fullName>
    </alternativeName>
</protein>
<keyword id="KW-0067">ATP-binding</keyword>
<keyword id="KW-0315">Glutamine amidotransferase</keyword>
<keyword id="KW-0332">GMP biosynthesis</keyword>
<keyword id="KW-0436">Ligase</keyword>
<keyword id="KW-0547">Nucleotide-binding</keyword>
<keyword id="KW-0658">Purine biosynthesis</keyword>
<sequence>MTDIHNHKILILDFGSQYTQLIARRVREVDVFCEIFPHDVAADFIKNYQAKGIILSGGPESVYDSDVKAPEIVFELGVPVLGICYGMQTMVMQHGGEVKGADQSEFGKAIINILNSTNNIFSNMEHEQLVWMSHSDKVTQTGEHFEIIASSTNAPVAAVAHKNKPFFGVQFHPETTHTENGKQIIENFVVNICGCDTLWNIENIIENDIKEIKQKVGTDKVILGLSGGVDSSVVAAILHQAIGDQLTCIFVDTGLLRLNEDDQVMQVFAEHMDINVIRINAKNRFLDALRGICDPEQKRKIIGKLFVDIFDEEAAKIENAKWLAQGTIYSDVIESAGNNQSKAHVIKSHHNVGGLPKEMKLKLLEPLRELFKDEVRKLGLGLGLPYNMLYRHPFPGPGLGVRILGEIKKEYVETLQKADAIFTEELYKHNLYHDVSQAFGVFLPVKSVGVVGDQRRYEYVIALRAVVSIDFMTATWANLPYDFLSLVSNRIVNEVKQVSRVVYDVTGKPPGTIEWE</sequence>
<name>GUAA_FRATM</name>
<feature type="chain" id="PRO_1000120304" description="GMP synthase [glutamine-hydrolyzing]">
    <location>
        <begin position="1"/>
        <end position="516"/>
    </location>
</feature>
<feature type="domain" description="Glutamine amidotransferase type-1" evidence="1">
    <location>
        <begin position="8"/>
        <end position="198"/>
    </location>
</feature>
<feature type="domain" description="GMPS ATP-PPase" evidence="1">
    <location>
        <begin position="199"/>
        <end position="391"/>
    </location>
</feature>
<feature type="active site" description="Nucleophile" evidence="1">
    <location>
        <position position="84"/>
    </location>
</feature>
<feature type="active site" evidence="1">
    <location>
        <position position="172"/>
    </location>
</feature>
<feature type="active site" evidence="1">
    <location>
        <position position="174"/>
    </location>
</feature>
<feature type="binding site" evidence="1">
    <location>
        <begin position="226"/>
        <end position="232"/>
    </location>
    <ligand>
        <name>ATP</name>
        <dbReference type="ChEBI" id="CHEBI:30616"/>
    </ligand>
</feature>